<organism>
    <name type="scientific">Polynucleobacter necessarius subsp. necessarius (strain STIR1)</name>
    <dbReference type="NCBI Taxonomy" id="452638"/>
    <lineage>
        <taxon>Bacteria</taxon>
        <taxon>Pseudomonadati</taxon>
        <taxon>Pseudomonadota</taxon>
        <taxon>Betaproteobacteria</taxon>
        <taxon>Burkholderiales</taxon>
        <taxon>Burkholderiaceae</taxon>
        <taxon>Polynucleobacter</taxon>
    </lineage>
</organism>
<name>RS7_POLNS</name>
<keyword id="KW-0687">Ribonucleoprotein</keyword>
<keyword id="KW-0689">Ribosomal protein</keyword>
<keyword id="KW-0694">RNA-binding</keyword>
<keyword id="KW-0699">rRNA-binding</keyword>
<keyword id="KW-0820">tRNA-binding</keyword>
<dbReference type="EMBL" id="CP001010">
    <property type="protein sequence ID" value="ACB43374.1"/>
    <property type="molecule type" value="Genomic_DNA"/>
</dbReference>
<dbReference type="SMR" id="B1XSP7"/>
<dbReference type="STRING" id="452638.Pnec_0046"/>
<dbReference type="KEGG" id="pne:Pnec_0046"/>
<dbReference type="eggNOG" id="COG0049">
    <property type="taxonomic scope" value="Bacteria"/>
</dbReference>
<dbReference type="HOGENOM" id="CLU_072226_1_1_4"/>
<dbReference type="OrthoDB" id="9807653at2"/>
<dbReference type="GO" id="GO:0015935">
    <property type="term" value="C:small ribosomal subunit"/>
    <property type="evidence" value="ECO:0007669"/>
    <property type="project" value="InterPro"/>
</dbReference>
<dbReference type="GO" id="GO:0019843">
    <property type="term" value="F:rRNA binding"/>
    <property type="evidence" value="ECO:0007669"/>
    <property type="project" value="UniProtKB-UniRule"/>
</dbReference>
<dbReference type="GO" id="GO:0003735">
    <property type="term" value="F:structural constituent of ribosome"/>
    <property type="evidence" value="ECO:0007669"/>
    <property type="project" value="InterPro"/>
</dbReference>
<dbReference type="GO" id="GO:0000049">
    <property type="term" value="F:tRNA binding"/>
    <property type="evidence" value="ECO:0007669"/>
    <property type="project" value="UniProtKB-UniRule"/>
</dbReference>
<dbReference type="GO" id="GO:0006412">
    <property type="term" value="P:translation"/>
    <property type="evidence" value="ECO:0007669"/>
    <property type="project" value="UniProtKB-UniRule"/>
</dbReference>
<dbReference type="CDD" id="cd14869">
    <property type="entry name" value="uS7_Bacteria"/>
    <property type="match status" value="1"/>
</dbReference>
<dbReference type="FunFam" id="1.10.455.10:FF:000001">
    <property type="entry name" value="30S ribosomal protein S7"/>
    <property type="match status" value="1"/>
</dbReference>
<dbReference type="Gene3D" id="1.10.455.10">
    <property type="entry name" value="Ribosomal protein S7 domain"/>
    <property type="match status" value="1"/>
</dbReference>
<dbReference type="HAMAP" id="MF_00480_B">
    <property type="entry name" value="Ribosomal_uS7_B"/>
    <property type="match status" value="1"/>
</dbReference>
<dbReference type="InterPro" id="IPR000235">
    <property type="entry name" value="Ribosomal_uS7"/>
</dbReference>
<dbReference type="InterPro" id="IPR005717">
    <property type="entry name" value="Ribosomal_uS7_bac/org-type"/>
</dbReference>
<dbReference type="InterPro" id="IPR020606">
    <property type="entry name" value="Ribosomal_uS7_CS"/>
</dbReference>
<dbReference type="InterPro" id="IPR023798">
    <property type="entry name" value="Ribosomal_uS7_dom"/>
</dbReference>
<dbReference type="InterPro" id="IPR036823">
    <property type="entry name" value="Ribosomal_uS7_dom_sf"/>
</dbReference>
<dbReference type="NCBIfam" id="TIGR01029">
    <property type="entry name" value="rpsG_bact"/>
    <property type="match status" value="1"/>
</dbReference>
<dbReference type="PANTHER" id="PTHR11205">
    <property type="entry name" value="RIBOSOMAL PROTEIN S7"/>
    <property type="match status" value="1"/>
</dbReference>
<dbReference type="Pfam" id="PF00177">
    <property type="entry name" value="Ribosomal_S7"/>
    <property type="match status" value="1"/>
</dbReference>
<dbReference type="PIRSF" id="PIRSF002122">
    <property type="entry name" value="RPS7p_RPS7a_RPS5e_RPS7o"/>
    <property type="match status" value="1"/>
</dbReference>
<dbReference type="SUPFAM" id="SSF47973">
    <property type="entry name" value="Ribosomal protein S7"/>
    <property type="match status" value="1"/>
</dbReference>
<dbReference type="PROSITE" id="PS00052">
    <property type="entry name" value="RIBOSOMAL_S7"/>
    <property type="match status" value="1"/>
</dbReference>
<gene>
    <name evidence="1" type="primary">rpsG</name>
    <name type="ordered locus">Pnec_0046</name>
</gene>
<accession>B1XSP7</accession>
<proteinExistence type="inferred from homology"/>
<protein>
    <recommendedName>
        <fullName evidence="1">Small ribosomal subunit protein uS7</fullName>
    </recommendedName>
    <alternativeName>
        <fullName evidence="2">30S ribosomal protein S7</fullName>
    </alternativeName>
</protein>
<feature type="chain" id="PRO_1000125982" description="Small ribosomal subunit protein uS7">
    <location>
        <begin position="1"/>
        <end position="156"/>
    </location>
</feature>
<sequence length="156" mass="17806">MPRRRKVPKREILPDPKFGNVEVAKFMNVLMLDGKKSVAERIVYGAFDHIEKKANKEPLEIFSTAMGNVKPMVEVKSRRVGGANYQVPVEVRPSRRSALAMRWLREAAKKRGEKSMAQRLANELLEAAEGRGGAMKKREEVHRMAEANKAFSHFRF</sequence>
<evidence type="ECO:0000255" key="1">
    <source>
        <dbReference type="HAMAP-Rule" id="MF_00480"/>
    </source>
</evidence>
<evidence type="ECO:0000305" key="2"/>
<reference key="1">
    <citation type="journal article" date="2013" name="Proc. Natl. Acad. Sci. U.S.A.">
        <title>Polynucleobacter necessarius, a model for genome reduction in both free-living and symbiotic bacteria.</title>
        <authorList>
            <person name="Boscaro V."/>
            <person name="Felletti M."/>
            <person name="Vannini C."/>
            <person name="Ackerman M.S."/>
            <person name="Chain P.S."/>
            <person name="Malfatti S."/>
            <person name="Vergez L.M."/>
            <person name="Shin M."/>
            <person name="Doak T.G."/>
            <person name="Lynch M."/>
            <person name="Petroni G."/>
        </authorList>
    </citation>
    <scope>NUCLEOTIDE SEQUENCE [LARGE SCALE GENOMIC DNA]</scope>
    <source>
        <strain>STIR1</strain>
    </source>
</reference>
<comment type="function">
    <text evidence="1">One of the primary rRNA binding proteins, it binds directly to 16S rRNA where it nucleates assembly of the head domain of the 30S subunit. Is located at the subunit interface close to the decoding center, probably blocks exit of the E-site tRNA.</text>
</comment>
<comment type="subunit">
    <text evidence="1">Part of the 30S ribosomal subunit. Contacts proteins S9 and S11.</text>
</comment>
<comment type="similarity">
    <text evidence="1">Belongs to the universal ribosomal protein uS7 family.</text>
</comment>